<feature type="chain" id="PRO_1000202626" description="S-adenosylmethionine synthase">
    <location>
        <begin position="1"/>
        <end position="422"/>
    </location>
</feature>
<feature type="region of interest" description="Flexible loop" evidence="1">
    <location>
        <begin position="99"/>
        <end position="109"/>
    </location>
</feature>
<feature type="region of interest" description="Disordered" evidence="2">
    <location>
        <begin position="390"/>
        <end position="422"/>
    </location>
</feature>
<feature type="binding site" description="in other chain" evidence="1">
    <location>
        <position position="15"/>
    </location>
    <ligand>
        <name>ATP</name>
        <dbReference type="ChEBI" id="CHEBI:30616"/>
        <note>ligand shared between two neighboring subunits</note>
    </ligand>
</feature>
<feature type="binding site" evidence="1">
    <location>
        <position position="17"/>
    </location>
    <ligand>
        <name>Mg(2+)</name>
        <dbReference type="ChEBI" id="CHEBI:18420"/>
    </ligand>
</feature>
<feature type="binding site" evidence="1">
    <location>
        <position position="43"/>
    </location>
    <ligand>
        <name>K(+)</name>
        <dbReference type="ChEBI" id="CHEBI:29103"/>
    </ligand>
</feature>
<feature type="binding site" description="in other chain" evidence="1">
    <location>
        <position position="56"/>
    </location>
    <ligand>
        <name>L-methionine</name>
        <dbReference type="ChEBI" id="CHEBI:57844"/>
        <note>ligand shared between two neighboring subunits</note>
    </ligand>
</feature>
<feature type="binding site" description="in other chain" evidence="1">
    <location>
        <position position="99"/>
    </location>
    <ligand>
        <name>L-methionine</name>
        <dbReference type="ChEBI" id="CHEBI:57844"/>
        <note>ligand shared between two neighboring subunits</note>
    </ligand>
</feature>
<feature type="binding site" description="in other chain" evidence="1">
    <location>
        <begin position="166"/>
        <end position="168"/>
    </location>
    <ligand>
        <name>ATP</name>
        <dbReference type="ChEBI" id="CHEBI:30616"/>
        <note>ligand shared between two neighboring subunits</note>
    </ligand>
</feature>
<feature type="binding site" description="in other chain" evidence="1">
    <location>
        <begin position="232"/>
        <end position="233"/>
    </location>
    <ligand>
        <name>ATP</name>
        <dbReference type="ChEBI" id="CHEBI:30616"/>
        <note>ligand shared between two neighboring subunits</note>
    </ligand>
</feature>
<feature type="binding site" evidence="1">
    <location>
        <position position="241"/>
    </location>
    <ligand>
        <name>ATP</name>
        <dbReference type="ChEBI" id="CHEBI:30616"/>
        <note>ligand shared between two neighboring subunits</note>
    </ligand>
</feature>
<feature type="binding site" evidence="1">
    <location>
        <position position="241"/>
    </location>
    <ligand>
        <name>L-methionine</name>
        <dbReference type="ChEBI" id="CHEBI:57844"/>
        <note>ligand shared between two neighboring subunits</note>
    </ligand>
</feature>
<feature type="binding site" description="in other chain" evidence="1">
    <location>
        <begin position="247"/>
        <end position="248"/>
    </location>
    <ligand>
        <name>ATP</name>
        <dbReference type="ChEBI" id="CHEBI:30616"/>
        <note>ligand shared between two neighboring subunits</note>
    </ligand>
</feature>
<feature type="binding site" evidence="1">
    <location>
        <position position="264"/>
    </location>
    <ligand>
        <name>ATP</name>
        <dbReference type="ChEBI" id="CHEBI:30616"/>
        <note>ligand shared between two neighboring subunits</note>
    </ligand>
</feature>
<feature type="binding site" evidence="1">
    <location>
        <position position="268"/>
    </location>
    <ligand>
        <name>ATP</name>
        <dbReference type="ChEBI" id="CHEBI:30616"/>
        <note>ligand shared between two neighboring subunits</note>
    </ligand>
</feature>
<feature type="binding site" description="in other chain" evidence="1">
    <location>
        <position position="272"/>
    </location>
    <ligand>
        <name>L-methionine</name>
        <dbReference type="ChEBI" id="CHEBI:57844"/>
        <note>ligand shared between two neighboring subunits</note>
    </ligand>
</feature>
<organism>
    <name type="scientific">Sorangium cellulosum (strain So ce56)</name>
    <name type="common">Polyangium cellulosum (strain So ce56)</name>
    <dbReference type="NCBI Taxonomy" id="448385"/>
    <lineage>
        <taxon>Bacteria</taxon>
        <taxon>Pseudomonadati</taxon>
        <taxon>Myxococcota</taxon>
        <taxon>Polyangia</taxon>
        <taxon>Polyangiales</taxon>
        <taxon>Polyangiaceae</taxon>
        <taxon>Sorangium</taxon>
    </lineage>
</organism>
<protein>
    <recommendedName>
        <fullName evidence="1">S-adenosylmethionine synthase</fullName>
        <shortName evidence="1">AdoMet synthase</shortName>
        <ecNumber evidence="1">2.5.1.6</ecNumber>
    </recommendedName>
    <alternativeName>
        <fullName evidence="1">MAT</fullName>
    </alternativeName>
    <alternativeName>
        <fullName evidence="1">Methionine adenosyltransferase</fullName>
    </alternativeName>
</protein>
<accession>A9EXT3</accession>
<name>METK_SORC5</name>
<sequence>MRRYQFTSESVTEGHPDKVCDQISDAILDGILEKDPTARVACETLVKTGMAVVAGEITTSAWVDMPVVVRNTIKDIGYTDAAMGFDYETCAVLTAIEKQSPDISRGVTEGEGLFKEQGAGDQGLMFGYATDETSELMPSPISYAHRLARKLADLRKSKKLDWLRPDGKTQVTIEYEDQTPVRVSAVVVSTQHSPEVKHKTIVDAVRSLIIEKCIPAKLMDKSTKIYVNPTGRFVVGGPFGDAGLTGRKIIVDTYGGMGRHGGGAFSGKDPTKVDRSACYYARYVAKNVVASKLAARCEVQIAYAIGVAQPVGVHVNTFGTGRVGEDVLEKYIMQNFDMRPKAIIEQLDLLKPIYRKTAAYGHFGRDEFTWEKTDRAAKLAEDLLRPTLAAVPATTNGAGSKNGSGSKKEPKRKGKKETGAQA</sequence>
<gene>
    <name evidence="1" type="primary">metK</name>
    <name type="ordered locus">sce7312</name>
</gene>
<comment type="function">
    <text evidence="1">Catalyzes the formation of S-adenosylmethionine (AdoMet) from methionine and ATP. The overall synthetic reaction is composed of two sequential steps, AdoMet formation and the subsequent tripolyphosphate hydrolysis which occurs prior to release of AdoMet from the enzyme.</text>
</comment>
<comment type="catalytic activity">
    <reaction evidence="1">
        <text>L-methionine + ATP + H2O = S-adenosyl-L-methionine + phosphate + diphosphate</text>
        <dbReference type="Rhea" id="RHEA:21080"/>
        <dbReference type="ChEBI" id="CHEBI:15377"/>
        <dbReference type="ChEBI" id="CHEBI:30616"/>
        <dbReference type="ChEBI" id="CHEBI:33019"/>
        <dbReference type="ChEBI" id="CHEBI:43474"/>
        <dbReference type="ChEBI" id="CHEBI:57844"/>
        <dbReference type="ChEBI" id="CHEBI:59789"/>
        <dbReference type="EC" id="2.5.1.6"/>
    </reaction>
</comment>
<comment type="cofactor">
    <cofactor evidence="1">
        <name>Mg(2+)</name>
        <dbReference type="ChEBI" id="CHEBI:18420"/>
    </cofactor>
    <text evidence="1">Binds 2 divalent ions per subunit.</text>
</comment>
<comment type="cofactor">
    <cofactor evidence="1">
        <name>K(+)</name>
        <dbReference type="ChEBI" id="CHEBI:29103"/>
    </cofactor>
    <text evidence="1">Binds 1 potassium ion per subunit.</text>
</comment>
<comment type="pathway">
    <text evidence="1">Amino-acid biosynthesis; S-adenosyl-L-methionine biosynthesis; S-adenosyl-L-methionine from L-methionine: step 1/1.</text>
</comment>
<comment type="subunit">
    <text evidence="1">Homotetramer; dimer of dimers.</text>
</comment>
<comment type="subcellular location">
    <subcellularLocation>
        <location evidence="1">Cytoplasm</location>
    </subcellularLocation>
</comment>
<comment type="similarity">
    <text evidence="1">Belongs to the AdoMet synthase family.</text>
</comment>
<evidence type="ECO:0000255" key="1">
    <source>
        <dbReference type="HAMAP-Rule" id="MF_00086"/>
    </source>
</evidence>
<evidence type="ECO:0000256" key="2">
    <source>
        <dbReference type="SAM" id="MobiDB-lite"/>
    </source>
</evidence>
<keyword id="KW-0067">ATP-binding</keyword>
<keyword id="KW-0963">Cytoplasm</keyword>
<keyword id="KW-0460">Magnesium</keyword>
<keyword id="KW-0479">Metal-binding</keyword>
<keyword id="KW-0547">Nucleotide-binding</keyword>
<keyword id="KW-0554">One-carbon metabolism</keyword>
<keyword id="KW-0630">Potassium</keyword>
<keyword id="KW-1185">Reference proteome</keyword>
<keyword id="KW-0808">Transferase</keyword>
<reference key="1">
    <citation type="journal article" date="2007" name="Nat. Biotechnol.">
        <title>Complete genome sequence of the myxobacterium Sorangium cellulosum.</title>
        <authorList>
            <person name="Schneiker S."/>
            <person name="Perlova O."/>
            <person name="Kaiser O."/>
            <person name="Gerth K."/>
            <person name="Alici A."/>
            <person name="Altmeyer M.O."/>
            <person name="Bartels D."/>
            <person name="Bekel T."/>
            <person name="Beyer S."/>
            <person name="Bode E."/>
            <person name="Bode H.B."/>
            <person name="Bolten C.J."/>
            <person name="Choudhuri J.V."/>
            <person name="Doss S."/>
            <person name="Elnakady Y.A."/>
            <person name="Frank B."/>
            <person name="Gaigalat L."/>
            <person name="Goesmann A."/>
            <person name="Groeger C."/>
            <person name="Gross F."/>
            <person name="Jelsbak L."/>
            <person name="Jelsbak L."/>
            <person name="Kalinowski J."/>
            <person name="Kegler C."/>
            <person name="Knauber T."/>
            <person name="Konietzny S."/>
            <person name="Kopp M."/>
            <person name="Krause L."/>
            <person name="Krug D."/>
            <person name="Linke B."/>
            <person name="Mahmud T."/>
            <person name="Martinez-Arias R."/>
            <person name="McHardy A.C."/>
            <person name="Merai M."/>
            <person name="Meyer F."/>
            <person name="Mormann S."/>
            <person name="Munoz-Dorado J."/>
            <person name="Perez J."/>
            <person name="Pradella S."/>
            <person name="Rachid S."/>
            <person name="Raddatz G."/>
            <person name="Rosenau F."/>
            <person name="Rueckert C."/>
            <person name="Sasse F."/>
            <person name="Scharfe M."/>
            <person name="Schuster S.C."/>
            <person name="Suen G."/>
            <person name="Treuner-Lange A."/>
            <person name="Velicer G.J."/>
            <person name="Vorholter F.-J."/>
            <person name="Weissman K.J."/>
            <person name="Welch R.D."/>
            <person name="Wenzel S.C."/>
            <person name="Whitworth D.E."/>
            <person name="Wilhelm S."/>
            <person name="Wittmann C."/>
            <person name="Bloecker H."/>
            <person name="Puehler A."/>
            <person name="Mueller R."/>
        </authorList>
    </citation>
    <scope>NUCLEOTIDE SEQUENCE [LARGE SCALE GENOMIC DNA]</scope>
    <source>
        <strain>So ce56</strain>
    </source>
</reference>
<dbReference type="EC" id="2.5.1.6" evidence="1"/>
<dbReference type="EMBL" id="AM746676">
    <property type="protein sequence ID" value="CAN97481.1"/>
    <property type="molecule type" value="Genomic_DNA"/>
</dbReference>
<dbReference type="RefSeq" id="WP_012239920.1">
    <property type="nucleotide sequence ID" value="NC_010162.1"/>
</dbReference>
<dbReference type="SMR" id="A9EXT3"/>
<dbReference type="STRING" id="448385.sce7312"/>
<dbReference type="KEGG" id="scl:sce7312"/>
<dbReference type="eggNOG" id="COG0192">
    <property type="taxonomic scope" value="Bacteria"/>
</dbReference>
<dbReference type="HOGENOM" id="CLU_041802_1_1_7"/>
<dbReference type="OrthoDB" id="9801686at2"/>
<dbReference type="BioCyc" id="SCEL448385:SCE_RS37455-MONOMER"/>
<dbReference type="UniPathway" id="UPA00315">
    <property type="reaction ID" value="UER00080"/>
</dbReference>
<dbReference type="Proteomes" id="UP000002139">
    <property type="component" value="Chromosome"/>
</dbReference>
<dbReference type="GO" id="GO:0005737">
    <property type="term" value="C:cytoplasm"/>
    <property type="evidence" value="ECO:0007669"/>
    <property type="project" value="UniProtKB-SubCell"/>
</dbReference>
<dbReference type="GO" id="GO:0005524">
    <property type="term" value="F:ATP binding"/>
    <property type="evidence" value="ECO:0007669"/>
    <property type="project" value="UniProtKB-UniRule"/>
</dbReference>
<dbReference type="GO" id="GO:0000287">
    <property type="term" value="F:magnesium ion binding"/>
    <property type="evidence" value="ECO:0007669"/>
    <property type="project" value="UniProtKB-UniRule"/>
</dbReference>
<dbReference type="GO" id="GO:0004478">
    <property type="term" value="F:methionine adenosyltransferase activity"/>
    <property type="evidence" value="ECO:0007669"/>
    <property type="project" value="UniProtKB-UniRule"/>
</dbReference>
<dbReference type="GO" id="GO:0006730">
    <property type="term" value="P:one-carbon metabolic process"/>
    <property type="evidence" value="ECO:0007669"/>
    <property type="project" value="UniProtKB-KW"/>
</dbReference>
<dbReference type="GO" id="GO:0006556">
    <property type="term" value="P:S-adenosylmethionine biosynthetic process"/>
    <property type="evidence" value="ECO:0007669"/>
    <property type="project" value="UniProtKB-UniRule"/>
</dbReference>
<dbReference type="CDD" id="cd18079">
    <property type="entry name" value="S-AdoMet_synt"/>
    <property type="match status" value="1"/>
</dbReference>
<dbReference type="FunFam" id="3.30.300.10:FF:000003">
    <property type="entry name" value="S-adenosylmethionine synthase"/>
    <property type="match status" value="1"/>
</dbReference>
<dbReference type="Gene3D" id="3.30.300.10">
    <property type="match status" value="3"/>
</dbReference>
<dbReference type="HAMAP" id="MF_00086">
    <property type="entry name" value="S_AdoMet_synth1"/>
    <property type="match status" value="1"/>
</dbReference>
<dbReference type="InterPro" id="IPR022631">
    <property type="entry name" value="ADOMET_SYNTHASE_CS"/>
</dbReference>
<dbReference type="InterPro" id="IPR022630">
    <property type="entry name" value="S-AdoMet_synt_C"/>
</dbReference>
<dbReference type="InterPro" id="IPR022629">
    <property type="entry name" value="S-AdoMet_synt_central"/>
</dbReference>
<dbReference type="InterPro" id="IPR022628">
    <property type="entry name" value="S-AdoMet_synt_N"/>
</dbReference>
<dbReference type="InterPro" id="IPR002133">
    <property type="entry name" value="S-AdoMet_synthetase"/>
</dbReference>
<dbReference type="InterPro" id="IPR022636">
    <property type="entry name" value="S-AdoMet_synthetase_sfam"/>
</dbReference>
<dbReference type="NCBIfam" id="TIGR01034">
    <property type="entry name" value="metK"/>
    <property type="match status" value="1"/>
</dbReference>
<dbReference type="PANTHER" id="PTHR11964">
    <property type="entry name" value="S-ADENOSYLMETHIONINE SYNTHETASE"/>
    <property type="match status" value="1"/>
</dbReference>
<dbReference type="Pfam" id="PF02773">
    <property type="entry name" value="S-AdoMet_synt_C"/>
    <property type="match status" value="1"/>
</dbReference>
<dbReference type="Pfam" id="PF02772">
    <property type="entry name" value="S-AdoMet_synt_M"/>
    <property type="match status" value="1"/>
</dbReference>
<dbReference type="Pfam" id="PF00438">
    <property type="entry name" value="S-AdoMet_synt_N"/>
    <property type="match status" value="1"/>
</dbReference>
<dbReference type="PIRSF" id="PIRSF000497">
    <property type="entry name" value="MAT"/>
    <property type="match status" value="1"/>
</dbReference>
<dbReference type="SUPFAM" id="SSF55973">
    <property type="entry name" value="S-adenosylmethionine synthetase"/>
    <property type="match status" value="3"/>
</dbReference>
<dbReference type="PROSITE" id="PS00376">
    <property type="entry name" value="ADOMET_SYNTHASE_1"/>
    <property type="match status" value="1"/>
</dbReference>
<dbReference type="PROSITE" id="PS00377">
    <property type="entry name" value="ADOMET_SYNTHASE_2"/>
    <property type="match status" value="1"/>
</dbReference>
<proteinExistence type="inferred from homology"/>